<dbReference type="EC" id="3.4.24.-" evidence="1"/>
<dbReference type="EMBL" id="CP001113">
    <property type="protein sequence ID" value="ACF64376.1"/>
    <property type="molecule type" value="Genomic_DNA"/>
</dbReference>
<dbReference type="RefSeq" id="WP_000750428.1">
    <property type="nucleotide sequence ID" value="NZ_CCMR01000001.1"/>
</dbReference>
<dbReference type="SMR" id="B4SZQ6"/>
<dbReference type="MEROPS" id="M74.001"/>
<dbReference type="KEGG" id="see:SNSL254_A2572"/>
<dbReference type="HOGENOM" id="CLU_052496_0_0_6"/>
<dbReference type="Proteomes" id="UP000008824">
    <property type="component" value="Chromosome"/>
</dbReference>
<dbReference type="GO" id="GO:0030288">
    <property type="term" value="C:outer membrane-bounded periplasmic space"/>
    <property type="evidence" value="ECO:0007669"/>
    <property type="project" value="InterPro"/>
</dbReference>
<dbReference type="GO" id="GO:0046872">
    <property type="term" value="F:metal ion binding"/>
    <property type="evidence" value="ECO:0007669"/>
    <property type="project" value="UniProtKB-KW"/>
</dbReference>
<dbReference type="GO" id="GO:0004222">
    <property type="term" value="F:metalloendopeptidase activity"/>
    <property type="evidence" value="ECO:0007669"/>
    <property type="project" value="UniProtKB-UniRule"/>
</dbReference>
<dbReference type="GO" id="GO:0004252">
    <property type="term" value="F:serine-type endopeptidase activity"/>
    <property type="evidence" value="ECO:0007669"/>
    <property type="project" value="InterPro"/>
</dbReference>
<dbReference type="GO" id="GO:0000270">
    <property type="term" value="P:peptidoglycan metabolic process"/>
    <property type="evidence" value="ECO:0007669"/>
    <property type="project" value="UniProtKB-UniRule"/>
</dbReference>
<dbReference type="GO" id="GO:0006508">
    <property type="term" value="P:proteolysis"/>
    <property type="evidence" value="ECO:0007669"/>
    <property type="project" value="UniProtKB-KW"/>
</dbReference>
<dbReference type="FunFam" id="3.30.1380.10:FF:000002">
    <property type="entry name" value="Penicillin-insensitive murein endopeptidase"/>
    <property type="match status" value="1"/>
</dbReference>
<dbReference type="Gene3D" id="3.30.1380.10">
    <property type="match status" value="1"/>
</dbReference>
<dbReference type="HAMAP" id="MF_01623">
    <property type="entry name" value="MepA"/>
    <property type="match status" value="1"/>
</dbReference>
<dbReference type="InterPro" id="IPR009045">
    <property type="entry name" value="Hedgehog_sig/DD-Pept_Zn-bd_sf"/>
</dbReference>
<dbReference type="InterPro" id="IPR005073">
    <property type="entry name" value="Peptidase_M74"/>
</dbReference>
<dbReference type="NCBIfam" id="NF006947">
    <property type="entry name" value="PRK09429.1"/>
    <property type="match status" value="1"/>
</dbReference>
<dbReference type="Pfam" id="PF03411">
    <property type="entry name" value="Peptidase_M74"/>
    <property type="match status" value="1"/>
</dbReference>
<dbReference type="PIRSF" id="PIRSF018455">
    <property type="entry name" value="MepA"/>
    <property type="match status" value="1"/>
</dbReference>
<dbReference type="SUPFAM" id="SSF55166">
    <property type="entry name" value="Hedgehog/DD-peptidase"/>
    <property type="match status" value="1"/>
</dbReference>
<comment type="function">
    <text evidence="1">Murein endopeptidase that cleaves the D-alanyl-meso-2,6-diamino-pimelyl amide bond that connects peptidoglycan strands. Likely plays a role in the removal of murein from the sacculus.</text>
</comment>
<comment type="cofactor">
    <cofactor evidence="1">
        <name>Zn(2+)</name>
        <dbReference type="ChEBI" id="CHEBI:29105"/>
    </cofactor>
    <text evidence="1">Binds 2 Zn(2+) ions per subunit. Zn(2+) ion 1 is bound in the active site. Zn(2+) ion 2 is bound at the dimer interface by residues from both subunits.</text>
</comment>
<comment type="subunit">
    <text evidence="1">Dimer.</text>
</comment>
<comment type="subcellular location">
    <subcellularLocation>
        <location evidence="1">Periplasm</location>
    </subcellularLocation>
</comment>
<comment type="similarity">
    <text evidence="1">Belongs to the peptidase M74 family.</text>
</comment>
<reference key="1">
    <citation type="journal article" date="2011" name="J. Bacteriol.">
        <title>Comparative genomics of 28 Salmonella enterica isolates: evidence for CRISPR-mediated adaptive sublineage evolution.</title>
        <authorList>
            <person name="Fricke W.F."/>
            <person name="Mammel M.K."/>
            <person name="McDermott P.F."/>
            <person name="Tartera C."/>
            <person name="White D.G."/>
            <person name="Leclerc J.E."/>
            <person name="Ravel J."/>
            <person name="Cebula T.A."/>
        </authorList>
    </citation>
    <scope>NUCLEOTIDE SEQUENCE [LARGE SCALE GENOMIC DNA]</scope>
    <source>
        <strain>SL254</strain>
    </source>
</reference>
<organism>
    <name type="scientific">Salmonella newport (strain SL254)</name>
    <dbReference type="NCBI Taxonomy" id="423368"/>
    <lineage>
        <taxon>Bacteria</taxon>
        <taxon>Pseudomonadati</taxon>
        <taxon>Pseudomonadota</taxon>
        <taxon>Gammaproteobacteria</taxon>
        <taxon>Enterobacterales</taxon>
        <taxon>Enterobacteriaceae</taxon>
        <taxon>Salmonella</taxon>
    </lineage>
</organism>
<keyword id="KW-1015">Disulfide bond</keyword>
<keyword id="KW-0378">Hydrolase</keyword>
<keyword id="KW-0479">Metal-binding</keyword>
<keyword id="KW-0482">Metalloprotease</keyword>
<keyword id="KW-0574">Periplasm</keyword>
<keyword id="KW-0645">Protease</keyword>
<keyword id="KW-0732">Signal</keyword>
<keyword id="KW-0862">Zinc</keyword>
<proteinExistence type="inferred from homology"/>
<name>MEPA_SALNS</name>
<evidence type="ECO:0000255" key="1">
    <source>
        <dbReference type="HAMAP-Rule" id="MF_01623"/>
    </source>
</evidence>
<evidence type="ECO:0000256" key="2">
    <source>
        <dbReference type="SAM" id="MobiDB-lite"/>
    </source>
</evidence>
<gene>
    <name evidence="1" type="primary">mepA</name>
    <name type="ordered locus">SNSL254_A2572</name>
</gene>
<protein>
    <recommendedName>
        <fullName evidence="1">Penicillin-insensitive murein endopeptidase</fullName>
        <ecNumber evidence="1">3.4.24.-</ecNumber>
    </recommendedName>
    <alternativeName>
        <fullName evidence="1">D-alanyl-D-alanine-endopeptidase</fullName>
        <shortName evidence="1">DD-endopeptidase</shortName>
    </alternativeName>
</protein>
<sequence>MKKTAIALLAWFVSSASLAATPWQKITHPVPGAAQSIGSFANGCIIGADTLPVQSDNYQVMRTDQRRYFGHPDLVMFIQRLSHQAQQRGLGTVLIGDMGMPAGGRFNGGHASHQTGLDVDIFLQLPKTRWSQAQLLRPQALDLVSRDGKHVVPSRWSSDIASLIKLAAQDNDVTRIFVNPAIKQQLCLDAGNDRDWLRKVRPWFQHRAHMHVRLRCPADSLECEDQPLPPPGDGCGAELQSWFEPPKPGTTKPEKKTPPPLPPSCQALLDEHVL</sequence>
<feature type="signal peptide" evidence="1">
    <location>
        <begin position="1"/>
        <end position="19"/>
    </location>
</feature>
<feature type="chain" id="PRO_1000186108" description="Penicillin-insensitive murein endopeptidase">
    <location>
        <begin position="20"/>
        <end position="274"/>
    </location>
</feature>
<feature type="region of interest" description="Disordered" evidence="2">
    <location>
        <begin position="225"/>
        <end position="274"/>
    </location>
</feature>
<feature type="binding site" evidence="1">
    <location>
        <position position="110"/>
    </location>
    <ligand>
        <name>Zn(2+)</name>
        <dbReference type="ChEBI" id="CHEBI:29105"/>
        <label>1</label>
    </ligand>
</feature>
<feature type="binding site" evidence="1">
    <location>
        <position position="113"/>
    </location>
    <ligand>
        <name>Zn(2+)</name>
        <dbReference type="ChEBI" id="CHEBI:29105"/>
        <label>1</label>
    </ligand>
</feature>
<feature type="binding site" evidence="1">
    <location>
        <position position="120"/>
    </location>
    <ligand>
        <name>Zn(2+)</name>
        <dbReference type="ChEBI" id="CHEBI:29105"/>
        <label>1</label>
    </ligand>
</feature>
<feature type="binding site" evidence="1">
    <location>
        <position position="147"/>
    </location>
    <ligand>
        <name>Zn(2+)</name>
        <dbReference type="ChEBI" id="CHEBI:29105"/>
        <label>2</label>
    </ligand>
</feature>
<feature type="binding site" evidence="1">
    <location>
        <position position="150"/>
    </location>
    <ligand>
        <name>Zn(2+)</name>
        <dbReference type="ChEBI" id="CHEBI:29105"/>
        <label>2</label>
    </ligand>
</feature>
<feature type="binding site" evidence="1">
    <location>
        <position position="211"/>
    </location>
    <ligand>
        <name>Zn(2+)</name>
        <dbReference type="ChEBI" id="CHEBI:29105"/>
        <label>1</label>
    </ligand>
</feature>
<feature type="disulfide bond" evidence="1">
    <location>
        <begin position="44"/>
        <end position="265"/>
    </location>
</feature>
<feature type="disulfide bond" evidence="1">
    <location>
        <begin position="187"/>
        <end position="235"/>
    </location>
</feature>
<feature type="disulfide bond" evidence="1">
    <location>
        <begin position="216"/>
        <end position="223"/>
    </location>
</feature>
<accession>B4SZQ6</accession>